<organism>
    <name type="scientific">Streptococcus equi subsp. zooepidemicus (strain H70)</name>
    <dbReference type="NCBI Taxonomy" id="553483"/>
    <lineage>
        <taxon>Bacteria</taxon>
        <taxon>Bacillati</taxon>
        <taxon>Bacillota</taxon>
        <taxon>Bacilli</taxon>
        <taxon>Lactobacillales</taxon>
        <taxon>Streptococcaceae</taxon>
        <taxon>Streptococcus</taxon>
    </lineage>
</organism>
<comment type="function">
    <text evidence="1">Specifically dimethylates two adjacent adenosines (A1518 and A1519) in the loop of a conserved hairpin near the 3'-end of 16S rRNA in the 30S particle. May play a critical role in biogenesis of 30S subunits.</text>
</comment>
<comment type="catalytic activity">
    <reaction evidence="1">
        <text>adenosine(1518)/adenosine(1519) in 16S rRNA + 4 S-adenosyl-L-methionine = N(6)-dimethyladenosine(1518)/N(6)-dimethyladenosine(1519) in 16S rRNA + 4 S-adenosyl-L-homocysteine + 4 H(+)</text>
        <dbReference type="Rhea" id="RHEA:19609"/>
        <dbReference type="Rhea" id="RHEA-COMP:10232"/>
        <dbReference type="Rhea" id="RHEA-COMP:10233"/>
        <dbReference type="ChEBI" id="CHEBI:15378"/>
        <dbReference type="ChEBI" id="CHEBI:57856"/>
        <dbReference type="ChEBI" id="CHEBI:59789"/>
        <dbReference type="ChEBI" id="CHEBI:74411"/>
        <dbReference type="ChEBI" id="CHEBI:74493"/>
        <dbReference type="EC" id="2.1.1.182"/>
    </reaction>
</comment>
<comment type="subcellular location">
    <subcellularLocation>
        <location evidence="1">Cytoplasm</location>
    </subcellularLocation>
</comment>
<comment type="similarity">
    <text evidence="1">Belongs to the class I-like SAM-binding methyltransferase superfamily. rRNA adenine N(6)-methyltransferase family. RsmA subfamily.</text>
</comment>
<dbReference type="EC" id="2.1.1.182" evidence="1"/>
<dbReference type="EMBL" id="FM204884">
    <property type="protein sequence ID" value="CAX00496.1"/>
    <property type="molecule type" value="Genomic_DNA"/>
</dbReference>
<dbReference type="SMR" id="C0MF36"/>
<dbReference type="KEGG" id="seq:SZO_17000"/>
<dbReference type="eggNOG" id="COG0030">
    <property type="taxonomic scope" value="Bacteria"/>
</dbReference>
<dbReference type="HOGENOM" id="CLU_041220_0_0_9"/>
<dbReference type="Proteomes" id="UP000001368">
    <property type="component" value="Chromosome"/>
</dbReference>
<dbReference type="GO" id="GO:0005829">
    <property type="term" value="C:cytosol"/>
    <property type="evidence" value="ECO:0007669"/>
    <property type="project" value="TreeGrafter"/>
</dbReference>
<dbReference type="GO" id="GO:0052908">
    <property type="term" value="F:16S rRNA (adenine(1518)-N(6)/adenine(1519)-N(6))-dimethyltransferase activity"/>
    <property type="evidence" value="ECO:0007669"/>
    <property type="project" value="UniProtKB-EC"/>
</dbReference>
<dbReference type="GO" id="GO:0003723">
    <property type="term" value="F:RNA binding"/>
    <property type="evidence" value="ECO:0007669"/>
    <property type="project" value="UniProtKB-KW"/>
</dbReference>
<dbReference type="CDD" id="cd02440">
    <property type="entry name" value="AdoMet_MTases"/>
    <property type="match status" value="1"/>
</dbReference>
<dbReference type="FunFam" id="3.40.50.150:FF:000023">
    <property type="entry name" value="Ribosomal RNA small subunit methyltransferase A"/>
    <property type="match status" value="1"/>
</dbReference>
<dbReference type="Gene3D" id="1.10.8.100">
    <property type="entry name" value="Ribosomal RNA adenine dimethylase-like, domain 2"/>
    <property type="match status" value="1"/>
</dbReference>
<dbReference type="Gene3D" id="3.40.50.150">
    <property type="entry name" value="Vaccinia Virus protein VP39"/>
    <property type="match status" value="1"/>
</dbReference>
<dbReference type="HAMAP" id="MF_00607">
    <property type="entry name" value="16SrRNA_methyltr_A"/>
    <property type="match status" value="1"/>
</dbReference>
<dbReference type="InterPro" id="IPR001737">
    <property type="entry name" value="KsgA/Erm"/>
</dbReference>
<dbReference type="InterPro" id="IPR023165">
    <property type="entry name" value="rRNA_Ade_diMease-like_C"/>
</dbReference>
<dbReference type="InterPro" id="IPR020596">
    <property type="entry name" value="rRNA_Ade_Mease_Trfase_CS"/>
</dbReference>
<dbReference type="InterPro" id="IPR020598">
    <property type="entry name" value="rRNA_Ade_methylase_Trfase_N"/>
</dbReference>
<dbReference type="InterPro" id="IPR011530">
    <property type="entry name" value="rRNA_adenine_dimethylase"/>
</dbReference>
<dbReference type="InterPro" id="IPR029063">
    <property type="entry name" value="SAM-dependent_MTases_sf"/>
</dbReference>
<dbReference type="NCBIfam" id="TIGR00755">
    <property type="entry name" value="ksgA"/>
    <property type="match status" value="1"/>
</dbReference>
<dbReference type="PANTHER" id="PTHR11727">
    <property type="entry name" value="DIMETHYLADENOSINE TRANSFERASE"/>
    <property type="match status" value="1"/>
</dbReference>
<dbReference type="PANTHER" id="PTHR11727:SF7">
    <property type="entry name" value="DIMETHYLADENOSINE TRANSFERASE-RELATED"/>
    <property type="match status" value="1"/>
</dbReference>
<dbReference type="Pfam" id="PF00398">
    <property type="entry name" value="RrnaAD"/>
    <property type="match status" value="1"/>
</dbReference>
<dbReference type="SMART" id="SM00650">
    <property type="entry name" value="rADc"/>
    <property type="match status" value="1"/>
</dbReference>
<dbReference type="SUPFAM" id="SSF53335">
    <property type="entry name" value="S-adenosyl-L-methionine-dependent methyltransferases"/>
    <property type="match status" value="1"/>
</dbReference>
<dbReference type="PROSITE" id="PS01131">
    <property type="entry name" value="RRNA_A_DIMETH"/>
    <property type="match status" value="1"/>
</dbReference>
<dbReference type="PROSITE" id="PS51689">
    <property type="entry name" value="SAM_RNA_A_N6_MT"/>
    <property type="match status" value="1"/>
</dbReference>
<evidence type="ECO:0000255" key="1">
    <source>
        <dbReference type="HAMAP-Rule" id="MF_00607"/>
    </source>
</evidence>
<reference key="1">
    <citation type="journal article" date="2009" name="PLoS Pathog.">
        <title>Genomic evidence for the evolution of Streptococcus equi: host restriction, increased virulence, and genetic exchange with human pathogens.</title>
        <authorList>
            <person name="Holden M.T.G."/>
            <person name="Heather Z."/>
            <person name="Paillot R."/>
            <person name="Steward K.F."/>
            <person name="Webb K."/>
            <person name="Ainslie F."/>
            <person name="Jourdan T."/>
            <person name="Bason N.C."/>
            <person name="Holroyd N.E."/>
            <person name="Mungall K."/>
            <person name="Quail M.A."/>
            <person name="Sanders M."/>
            <person name="Simmonds M."/>
            <person name="Willey D."/>
            <person name="Brooks K."/>
            <person name="Aanensen D.M."/>
            <person name="Spratt B.G."/>
            <person name="Jolley K.A."/>
            <person name="Maiden M.C.J."/>
            <person name="Kehoe M."/>
            <person name="Chanter N."/>
            <person name="Bentley S.D."/>
            <person name="Robinson C."/>
            <person name="Maskell D.J."/>
            <person name="Parkhill J."/>
            <person name="Waller A.S."/>
        </authorList>
    </citation>
    <scope>NUCLEOTIDE SEQUENCE [LARGE SCALE GENOMIC DNA]</scope>
    <source>
        <strain>H70</strain>
    </source>
</reference>
<feature type="chain" id="PRO_1000212254" description="Ribosomal RNA small subunit methyltransferase A">
    <location>
        <begin position="1"/>
        <end position="290"/>
    </location>
</feature>
<feature type="binding site" evidence="1">
    <location>
        <position position="27"/>
    </location>
    <ligand>
        <name>S-adenosyl-L-methionine</name>
        <dbReference type="ChEBI" id="CHEBI:59789"/>
    </ligand>
</feature>
<feature type="binding site" evidence="1">
    <location>
        <position position="29"/>
    </location>
    <ligand>
        <name>S-adenosyl-L-methionine</name>
        <dbReference type="ChEBI" id="CHEBI:59789"/>
    </ligand>
</feature>
<feature type="binding site" evidence="1">
    <location>
        <position position="54"/>
    </location>
    <ligand>
        <name>S-adenosyl-L-methionine</name>
        <dbReference type="ChEBI" id="CHEBI:59789"/>
    </ligand>
</feature>
<feature type="binding site" evidence="1">
    <location>
        <position position="75"/>
    </location>
    <ligand>
        <name>S-adenosyl-L-methionine</name>
        <dbReference type="ChEBI" id="CHEBI:59789"/>
    </ligand>
</feature>
<feature type="binding site" evidence="1">
    <location>
        <position position="100"/>
    </location>
    <ligand>
        <name>S-adenosyl-L-methionine</name>
        <dbReference type="ChEBI" id="CHEBI:59789"/>
    </ligand>
</feature>
<feature type="binding site" evidence="1">
    <location>
        <position position="125"/>
    </location>
    <ligand>
        <name>S-adenosyl-L-methionine</name>
        <dbReference type="ChEBI" id="CHEBI:59789"/>
    </ligand>
</feature>
<name>RSMA_STRS7</name>
<sequence length="290" mass="32655">MRIADYSVTKAILDRYGFTFKKSFGQNFLTDTNILQKIVDTAEIDKSVNVIEIGPGIGALTEFLAERAAEVMAFEIDERLVPILADTLRDFDNVQVVNQDILKADLQTQLKQFSNPDLPIKVVANLPYYITTPILMHLIESKIPFQEFVVMMQREVADRISAEPNTKAYGSLSIAVQYYMTAKIAFVVPRTVFVPAPNVDSAILKMTRRDQPLIEVQDEDFFFRVSRVGFVHRRKTLWNNLVSHFGKAEDTKARLEQGLALAGIKPSIRGEALSIQDFGRLADALKQVGL</sequence>
<proteinExistence type="inferred from homology"/>
<gene>
    <name evidence="1" type="primary">rsmA</name>
    <name evidence="1" type="synonym">ksgA</name>
    <name type="ordered locus">SZO_17000</name>
</gene>
<keyword id="KW-0963">Cytoplasm</keyword>
<keyword id="KW-0489">Methyltransferase</keyword>
<keyword id="KW-0694">RNA-binding</keyword>
<keyword id="KW-0698">rRNA processing</keyword>
<keyword id="KW-0949">S-adenosyl-L-methionine</keyword>
<keyword id="KW-0808">Transferase</keyword>
<accession>C0MF36</accession>
<protein>
    <recommendedName>
        <fullName evidence="1">Ribosomal RNA small subunit methyltransferase A</fullName>
        <ecNumber evidence="1">2.1.1.182</ecNumber>
    </recommendedName>
    <alternativeName>
        <fullName evidence="1">16S rRNA (adenine(1518)-N(6)/adenine(1519)-N(6))-dimethyltransferase</fullName>
    </alternativeName>
    <alternativeName>
        <fullName evidence="1">16S rRNA dimethyladenosine transferase</fullName>
    </alternativeName>
    <alternativeName>
        <fullName evidence="1">16S rRNA dimethylase</fullName>
    </alternativeName>
    <alternativeName>
        <fullName evidence="1">S-adenosylmethionine-6-N', N'-adenosyl(rRNA) dimethyltransferase</fullName>
    </alternativeName>
</protein>